<gene>
    <name type="ordered locus">Ken-094</name>
</gene>
<evidence type="ECO:0000305" key="1"/>
<organism>
    <name type="scientific">African swine fever virus (isolate Pig/Kenya/KEN-50/1950)</name>
    <name type="common">ASFV</name>
    <dbReference type="NCBI Taxonomy" id="561445"/>
    <lineage>
        <taxon>Viruses</taxon>
        <taxon>Varidnaviria</taxon>
        <taxon>Bamfordvirae</taxon>
        <taxon>Nucleocytoviricota</taxon>
        <taxon>Pokkesviricetes</taxon>
        <taxon>Asfuvirales</taxon>
        <taxon>Asfarviridae</taxon>
        <taxon>Asfivirus</taxon>
        <taxon>African swine fever virus</taxon>
    </lineage>
</organism>
<organismHost>
    <name type="scientific">Ornithodoros</name>
    <name type="common">relapsing fever ticks</name>
    <dbReference type="NCBI Taxonomy" id="6937"/>
</organismHost>
<organismHost>
    <name type="scientific">Phacochoerus aethiopicus</name>
    <name type="common">Warthog</name>
    <dbReference type="NCBI Taxonomy" id="85517"/>
</organismHost>
<organismHost>
    <name type="scientific">Phacochoerus africanus</name>
    <name type="common">Warthog</name>
    <dbReference type="NCBI Taxonomy" id="41426"/>
</organismHost>
<organismHost>
    <name type="scientific">Potamochoerus larvatus</name>
    <name type="common">Bushpig</name>
    <dbReference type="NCBI Taxonomy" id="273792"/>
</organismHost>
<organismHost>
    <name type="scientific">Sus scrofa</name>
    <name type="common">Pig</name>
    <dbReference type="NCBI Taxonomy" id="9823"/>
</organismHost>
<proteinExistence type="inferred from homology"/>
<comment type="induction">
    <text evidence="1">Expressed in the late phase of the viral replicative cycle.</text>
</comment>
<comment type="similarity">
    <text evidence="1">Belongs to the asfivirus B125R family.</text>
</comment>
<reference key="1">
    <citation type="submission" date="2003-03" db="EMBL/GenBank/DDBJ databases">
        <title>African swine fever virus genomes.</title>
        <authorList>
            <person name="Kutish G.F."/>
            <person name="Rock D.L."/>
        </authorList>
    </citation>
    <scope>NUCLEOTIDE SEQUENCE [LARGE SCALE GENOMIC DNA]</scope>
</reference>
<feature type="chain" id="PRO_0000373501" description="Uncharacterized protein B125R">
    <location>
        <begin position="1"/>
        <end position="125"/>
    </location>
</feature>
<dbReference type="EMBL" id="AY261360">
    <property type="status" value="NOT_ANNOTATED_CDS"/>
    <property type="molecule type" value="Genomic_DNA"/>
</dbReference>
<dbReference type="Proteomes" id="UP000000861">
    <property type="component" value="Segment"/>
</dbReference>
<keyword id="KW-0426">Late protein</keyword>
<name>VF125_ASFK5</name>
<sequence length="125" mass="14818">MAVYAKDLDNNKELNQKLINDQLKIIDTLLLAEKKNFLVYELPAHFDFSSGDPLGSQRDIYYAIIKSLEERGFTVKICMKGDRALLFITWKKIQSIEINKKEEYLRMHFIQDEEKAFYCKFLESR</sequence>
<accession>P0CA33</accession>
<protein>
    <recommendedName>
        <fullName>Uncharacterized protein B125R</fullName>
        <shortName>pB125R</shortName>
    </recommendedName>
</protein>